<proteinExistence type="inferred from homology"/>
<organism>
    <name type="scientific">Vibrio cholerae serotype O1 (strain ATCC 39315 / El Tor Inaba N16961)</name>
    <dbReference type="NCBI Taxonomy" id="243277"/>
    <lineage>
        <taxon>Bacteria</taxon>
        <taxon>Pseudomonadati</taxon>
        <taxon>Pseudomonadota</taxon>
        <taxon>Gammaproteobacteria</taxon>
        <taxon>Vibrionales</taxon>
        <taxon>Vibrionaceae</taxon>
        <taxon>Vibrio</taxon>
    </lineage>
</organism>
<reference key="1">
    <citation type="journal article" date="2000" name="Nature">
        <title>DNA sequence of both chromosomes of the cholera pathogen Vibrio cholerae.</title>
        <authorList>
            <person name="Heidelberg J.F."/>
            <person name="Eisen J.A."/>
            <person name="Nelson W.C."/>
            <person name="Clayton R.A."/>
            <person name="Gwinn M.L."/>
            <person name="Dodson R.J."/>
            <person name="Haft D.H."/>
            <person name="Hickey E.K."/>
            <person name="Peterson J.D."/>
            <person name="Umayam L.A."/>
            <person name="Gill S.R."/>
            <person name="Nelson K.E."/>
            <person name="Read T.D."/>
            <person name="Tettelin H."/>
            <person name="Richardson D.L."/>
            <person name="Ermolaeva M.D."/>
            <person name="Vamathevan J.J."/>
            <person name="Bass S."/>
            <person name="Qin H."/>
            <person name="Dragoi I."/>
            <person name="Sellers P."/>
            <person name="McDonald L.A."/>
            <person name="Utterback T.R."/>
            <person name="Fleischmann R.D."/>
            <person name="Nierman W.C."/>
            <person name="White O."/>
            <person name="Salzberg S.L."/>
            <person name="Smith H.O."/>
            <person name="Colwell R.R."/>
            <person name="Mekalanos J.J."/>
            <person name="Venter J.C."/>
            <person name="Fraser C.M."/>
        </authorList>
    </citation>
    <scope>NUCLEOTIDE SEQUENCE [LARGE SCALE GENOMIC DNA]</scope>
    <source>
        <strain>ATCC 39315 / El Tor Inaba N16961</strain>
    </source>
</reference>
<sequence>MSEVNVPLSFSDAAAKRVKALIAEEENPSLMLRVYITGGGCSGFQYGFTFDETVNEGDTKIENSGVILVVDPMSLQYLIGGVVDYTEGLEGSRFFVNNPNATTTCGCGASFSV</sequence>
<gene>
    <name evidence="1" type="primary">erpA</name>
    <name type="ordered locus">VC_0627</name>
</gene>
<protein>
    <recommendedName>
        <fullName evidence="1">Iron-sulfur cluster insertion protein ErpA</fullName>
    </recommendedName>
</protein>
<accession>Q9KU96</accession>
<comment type="function">
    <text evidence="1">Required for insertion of 4Fe-4S clusters for at least IspG.</text>
</comment>
<comment type="cofactor">
    <cofactor evidence="1">
        <name>iron-sulfur cluster</name>
        <dbReference type="ChEBI" id="CHEBI:30408"/>
    </cofactor>
    <text evidence="1">Binds 1 iron-sulfur cluster per subunit.</text>
</comment>
<comment type="subunit">
    <text evidence="1">Homodimer.</text>
</comment>
<comment type="similarity">
    <text evidence="1">Belongs to the HesB/IscA family.</text>
</comment>
<dbReference type="EMBL" id="AE003852">
    <property type="protein sequence ID" value="AAF93793.1"/>
    <property type="molecule type" value="Genomic_DNA"/>
</dbReference>
<dbReference type="PIR" id="F82300">
    <property type="entry name" value="F82300"/>
</dbReference>
<dbReference type="RefSeq" id="NP_230276.1">
    <property type="nucleotide sequence ID" value="NC_002505.1"/>
</dbReference>
<dbReference type="RefSeq" id="WP_000005741.1">
    <property type="nucleotide sequence ID" value="NZ_LT906614.1"/>
</dbReference>
<dbReference type="SMR" id="Q9KU96"/>
<dbReference type="STRING" id="243277.VC_0627"/>
<dbReference type="DNASU" id="2615415"/>
<dbReference type="EnsemblBacteria" id="AAF93793">
    <property type="protein sequence ID" value="AAF93793"/>
    <property type="gene ID" value="VC_0627"/>
</dbReference>
<dbReference type="GeneID" id="88784003"/>
<dbReference type="KEGG" id="vch:VC_0627"/>
<dbReference type="PATRIC" id="fig|243277.26.peg.597"/>
<dbReference type="eggNOG" id="COG0316">
    <property type="taxonomic scope" value="Bacteria"/>
</dbReference>
<dbReference type="HOGENOM" id="CLU_069054_5_3_6"/>
<dbReference type="Proteomes" id="UP000000584">
    <property type="component" value="Chromosome 1"/>
</dbReference>
<dbReference type="GO" id="GO:0005829">
    <property type="term" value="C:cytosol"/>
    <property type="evidence" value="ECO:0000318"/>
    <property type="project" value="GO_Central"/>
</dbReference>
<dbReference type="GO" id="GO:0051537">
    <property type="term" value="F:2 iron, 2 sulfur cluster binding"/>
    <property type="evidence" value="ECO:0000318"/>
    <property type="project" value="GO_Central"/>
</dbReference>
<dbReference type="GO" id="GO:0051539">
    <property type="term" value="F:4 iron, 4 sulfur cluster binding"/>
    <property type="evidence" value="ECO:0000318"/>
    <property type="project" value="GO_Central"/>
</dbReference>
<dbReference type="GO" id="GO:0005506">
    <property type="term" value="F:iron ion binding"/>
    <property type="evidence" value="ECO:0000318"/>
    <property type="project" value="GO_Central"/>
</dbReference>
<dbReference type="GO" id="GO:0016226">
    <property type="term" value="P:iron-sulfur cluster assembly"/>
    <property type="evidence" value="ECO:0000318"/>
    <property type="project" value="GO_Central"/>
</dbReference>
<dbReference type="FunFam" id="2.60.300.12:FF:000002">
    <property type="entry name" value="Iron-sulfur cluster insertion protein ErpA"/>
    <property type="match status" value="1"/>
</dbReference>
<dbReference type="Gene3D" id="2.60.300.12">
    <property type="entry name" value="HesB-like domain"/>
    <property type="match status" value="1"/>
</dbReference>
<dbReference type="HAMAP" id="MF_01380">
    <property type="entry name" value="Fe_S_insert_ErpA"/>
    <property type="match status" value="1"/>
</dbReference>
<dbReference type="InterPro" id="IPR000361">
    <property type="entry name" value="FeS_biogenesis"/>
</dbReference>
<dbReference type="InterPro" id="IPR016092">
    <property type="entry name" value="FeS_cluster_insertion"/>
</dbReference>
<dbReference type="InterPro" id="IPR017870">
    <property type="entry name" value="FeS_cluster_insertion_CS"/>
</dbReference>
<dbReference type="InterPro" id="IPR023063">
    <property type="entry name" value="FeS_cluster_insertion_RrpA"/>
</dbReference>
<dbReference type="InterPro" id="IPR035903">
    <property type="entry name" value="HesB-like_dom_sf"/>
</dbReference>
<dbReference type="NCBIfam" id="TIGR00049">
    <property type="entry name" value="iron-sulfur cluster assembly accessory protein"/>
    <property type="match status" value="1"/>
</dbReference>
<dbReference type="NCBIfam" id="NF010147">
    <property type="entry name" value="PRK13623.1"/>
    <property type="match status" value="1"/>
</dbReference>
<dbReference type="PANTHER" id="PTHR43011">
    <property type="entry name" value="IRON-SULFUR CLUSTER ASSEMBLY 2 HOMOLOG, MITOCHONDRIAL"/>
    <property type="match status" value="1"/>
</dbReference>
<dbReference type="PANTHER" id="PTHR43011:SF1">
    <property type="entry name" value="IRON-SULFUR CLUSTER ASSEMBLY 2 HOMOLOG, MITOCHONDRIAL"/>
    <property type="match status" value="1"/>
</dbReference>
<dbReference type="Pfam" id="PF01521">
    <property type="entry name" value="Fe-S_biosyn"/>
    <property type="match status" value="1"/>
</dbReference>
<dbReference type="SUPFAM" id="SSF89360">
    <property type="entry name" value="HesB-like domain"/>
    <property type="match status" value="1"/>
</dbReference>
<dbReference type="PROSITE" id="PS01152">
    <property type="entry name" value="HESB"/>
    <property type="match status" value="1"/>
</dbReference>
<keyword id="KW-0408">Iron</keyword>
<keyword id="KW-0411">Iron-sulfur</keyword>
<keyword id="KW-0479">Metal-binding</keyword>
<keyword id="KW-1185">Reference proteome</keyword>
<evidence type="ECO:0000255" key="1">
    <source>
        <dbReference type="HAMAP-Rule" id="MF_01380"/>
    </source>
</evidence>
<feature type="chain" id="PRO_0000311568" description="Iron-sulfur cluster insertion protein ErpA">
    <location>
        <begin position="1"/>
        <end position="113"/>
    </location>
</feature>
<feature type="binding site" evidence="1">
    <location>
        <position position="41"/>
    </location>
    <ligand>
        <name>iron-sulfur cluster</name>
        <dbReference type="ChEBI" id="CHEBI:30408"/>
    </ligand>
</feature>
<feature type="binding site" evidence="1">
    <location>
        <position position="105"/>
    </location>
    <ligand>
        <name>iron-sulfur cluster</name>
        <dbReference type="ChEBI" id="CHEBI:30408"/>
    </ligand>
</feature>
<feature type="binding site" evidence="1">
    <location>
        <position position="107"/>
    </location>
    <ligand>
        <name>iron-sulfur cluster</name>
        <dbReference type="ChEBI" id="CHEBI:30408"/>
    </ligand>
</feature>
<name>ERPA_VIBCH</name>